<organism>
    <name type="scientific">Alkalilimnicola ehrlichii (strain ATCC BAA-1101 / DSM 17681 / MLHE-1)</name>
    <dbReference type="NCBI Taxonomy" id="187272"/>
    <lineage>
        <taxon>Bacteria</taxon>
        <taxon>Pseudomonadati</taxon>
        <taxon>Pseudomonadota</taxon>
        <taxon>Gammaproteobacteria</taxon>
        <taxon>Chromatiales</taxon>
        <taxon>Ectothiorhodospiraceae</taxon>
        <taxon>Alkalilimnicola</taxon>
    </lineage>
</organism>
<keyword id="KW-0028">Amino-acid biosynthesis</keyword>
<keyword id="KW-0057">Aromatic amino acid biosynthesis</keyword>
<keyword id="KW-0456">Lyase</keyword>
<keyword id="KW-1185">Reference proteome</keyword>
<keyword id="KW-0822">Tryptophan biosynthesis</keyword>
<name>TRPA_ALKEH</name>
<protein>
    <recommendedName>
        <fullName evidence="1">Tryptophan synthase alpha chain</fullName>
        <ecNumber evidence="1">4.2.1.20</ecNumber>
    </recommendedName>
</protein>
<reference key="1">
    <citation type="submission" date="2006-08" db="EMBL/GenBank/DDBJ databases">
        <title>Complete sequence of Alkalilimnicola ehrilichei MLHE-1.</title>
        <authorList>
            <person name="Copeland A."/>
            <person name="Lucas S."/>
            <person name="Lapidus A."/>
            <person name="Barry K."/>
            <person name="Detter J.C."/>
            <person name="Glavina del Rio T."/>
            <person name="Hammon N."/>
            <person name="Israni S."/>
            <person name="Dalin E."/>
            <person name="Tice H."/>
            <person name="Pitluck S."/>
            <person name="Sims D."/>
            <person name="Brettin T."/>
            <person name="Bruce D."/>
            <person name="Han C."/>
            <person name="Tapia R."/>
            <person name="Gilna P."/>
            <person name="Schmutz J."/>
            <person name="Larimer F."/>
            <person name="Land M."/>
            <person name="Hauser L."/>
            <person name="Kyrpides N."/>
            <person name="Mikhailova N."/>
            <person name="Oremland R.S."/>
            <person name="Hoeft S.E."/>
            <person name="Switzer-Blum J."/>
            <person name="Kulp T."/>
            <person name="King G."/>
            <person name="Tabita R."/>
            <person name="Witte B."/>
            <person name="Santini J.M."/>
            <person name="Basu P."/>
            <person name="Hollibaugh J.T."/>
            <person name="Xie G."/>
            <person name="Stolz J.F."/>
            <person name="Richardson P."/>
        </authorList>
    </citation>
    <scope>NUCLEOTIDE SEQUENCE [LARGE SCALE GENOMIC DNA]</scope>
    <source>
        <strain>ATCC BAA-1101 / DSM 17681 / MLHE-1</strain>
    </source>
</reference>
<dbReference type="EC" id="4.2.1.20" evidence="1"/>
<dbReference type="EMBL" id="CP000453">
    <property type="protein sequence ID" value="ABI56586.1"/>
    <property type="molecule type" value="Genomic_DNA"/>
</dbReference>
<dbReference type="RefSeq" id="WP_011628981.1">
    <property type="nucleotide sequence ID" value="NC_008340.1"/>
</dbReference>
<dbReference type="SMR" id="Q0A9A1"/>
<dbReference type="KEGG" id="aeh:Mlg_1237"/>
<dbReference type="eggNOG" id="COG0159">
    <property type="taxonomic scope" value="Bacteria"/>
</dbReference>
<dbReference type="HOGENOM" id="CLU_016734_0_0_6"/>
<dbReference type="OrthoDB" id="9804578at2"/>
<dbReference type="UniPathway" id="UPA00035">
    <property type="reaction ID" value="UER00044"/>
</dbReference>
<dbReference type="Proteomes" id="UP000001962">
    <property type="component" value="Chromosome"/>
</dbReference>
<dbReference type="GO" id="GO:0005829">
    <property type="term" value="C:cytosol"/>
    <property type="evidence" value="ECO:0007669"/>
    <property type="project" value="TreeGrafter"/>
</dbReference>
<dbReference type="GO" id="GO:0004834">
    <property type="term" value="F:tryptophan synthase activity"/>
    <property type="evidence" value="ECO:0007669"/>
    <property type="project" value="UniProtKB-UniRule"/>
</dbReference>
<dbReference type="CDD" id="cd04724">
    <property type="entry name" value="Tryptophan_synthase_alpha"/>
    <property type="match status" value="1"/>
</dbReference>
<dbReference type="FunFam" id="3.20.20.70:FF:000037">
    <property type="entry name" value="Tryptophan synthase alpha chain"/>
    <property type="match status" value="1"/>
</dbReference>
<dbReference type="Gene3D" id="3.20.20.70">
    <property type="entry name" value="Aldolase class I"/>
    <property type="match status" value="1"/>
</dbReference>
<dbReference type="HAMAP" id="MF_00131">
    <property type="entry name" value="Trp_synth_alpha"/>
    <property type="match status" value="1"/>
</dbReference>
<dbReference type="InterPro" id="IPR013785">
    <property type="entry name" value="Aldolase_TIM"/>
</dbReference>
<dbReference type="InterPro" id="IPR011060">
    <property type="entry name" value="RibuloseP-bd_barrel"/>
</dbReference>
<dbReference type="InterPro" id="IPR018204">
    <property type="entry name" value="Trp_synthase_alpha_AS"/>
</dbReference>
<dbReference type="InterPro" id="IPR002028">
    <property type="entry name" value="Trp_synthase_suA"/>
</dbReference>
<dbReference type="NCBIfam" id="TIGR00262">
    <property type="entry name" value="trpA"/>
    <property type="match status" value="1"/>
</dbReference>
<dbReference type="PANTHER" id="PTHR43406:SF1">
    <property type="entry name" value="TRYPTOPHAN SYNTHASE ALPHA CHAIN, CHLOROPLASTIC"/>
    <property type="match status" value="1"/>
</dbReference>
<dbReference type="PANTHER" id="PTHR43406">
    <property type="entry name" value="TRYPTOPHAN SYNTHASE, ALPHA CHAIN"/>
    <property type="match status" value="1"/>
</dbReference>
<dbReference type="Pfam" id="PF00290">
    <property type="entry name" value="Trp_syntA"/>
    <property type="match status" value="1"/>
</dbReference>
<dbReference type="SUPFAM" id="SSF51366">
    <property type="entry name" value="Ribulose-phoshate binding barrel"/>
    <property type="match status" value="1"/>
</dbReference>
<dbReference type="PROSITE" id="PS00167">
    <property type="entry name" value="TRP_SYNTHASE_ALPHA"/>
    <property type="match status" value="1"/>
</dbReference>
<evidence type="ECO:0000255" key="1">
    <source>
        <dbReference type="HAMAP-Rule" id="MF_00131"/>
    </source>
</evidence>
<sequence>MNRLEKRMSACRKAGRKALIPYITAGDPGPEHTVPLMHALVGAGADVLELGVPFSDPMADGPVIQAACERALAHGTTLRDVFDMVRRFREQDGETPVVLMGYLNPVEYLGPAVFAEEAAAAGVDGVLTVDLPPEEAAPFTQAFAANDLCPIFLVAPTTAGERLEAVCQAARGFVYYVAIKGVTGVAELDVDDIARRVSAVRARTDLPVGVGFGIRDAESAARVGAVADAVIVGSALVNRIAGLTEQPERVPAVLAEALGEMRRALDGLAEEVAS</sequence>
<gene>
    <name evidence="1" type="primary">trpA</name>
    <name type="ordered locus">Mlg_1237</name>
</gene>
<feature type="chain" id="PRO_1000018164" description="Tryptophan synthase alpha chain">
    <location>
        <begin position="1"/>
        <end position="274"/>
    </location>
</feature>
<feature type="active site" description="Proton acceptor" evidence="1">
    <location>
        <position position="49"/>
    </location>
</feature>
<feature type="active site" description="Proton acceptor" evidence="1">
    <location>
        <position position="60"/>
    </location>
</feature>
<accession>Q0A9A1</accession>
<proteinExistence type="inferred from homology"/>
<comment type="function">
    <text evidence="1">The alpha subunit is responsible for the aldol cleavage of indoleglycerol phosphate to indole and glyceraldehyde 3-phosphate.</text>
</comment>
<comment type="catalytic activity">
    <reaction evidence="1">
        <text>(1S,2R)-1-C-(indol-3-yl)glycerol 3-phosphate + L-serine = D-glyceraldehyde 3-phosphate + L-tryptophan + H2O</text>
        <dbReference type="Rhea" id="RHEA:10532"/>
        <dbReference type="ChEBI" id="CHEBI:15377"/>
        <dbReference type="ChEBI" id="CHEBI:33384"/>
        <dbReference type="ChEBI" id="CHEBI:57912"/>
        <dbReference type="ChEBI" id="CHEBI:58866"/>
        <dbReference type="ChEBI" id="CHEBI:59776"/>
        <dbReference type="EC" id="4.2.1.20"/>
    </reaction>
</comment>
<comment type="pathway">
    <text evidence="1">Amino-acid biosynthesis; L-tryptophan biosynthesis; L-tryptophan from chorismate: step 5/5.</text>
</comment>
<comment type="subunit">
    <text evidence="1">Tetramer of two alpha and two beta chains.</text>
</comment>
<comment type="similarity">
    <text evidence="1">Belongs to the TrpA family.</text>
</comment>